<name>ADG1_SCHPO</name>
<dbReference type="EMBL" id="CU329670">
    <property type="protein sequence ID" value="CAB83086.1"/>
    <property type="molecule type" value="Genomic_DNA"/>
</dbReference>
<dbReference type="RefSeq" id="NP_594922.1">
    <property type="nucleotide sequence ID" value="NM_001020354.2"/>
</dbReference>
<dbReference type="BioGRID" id="279485">
    <property type="interactions" value="1"/>
</dbReference>
<dbReference type="STRING" id="284812.Q9P7E7"/>
<dbReference type="PaxDb" id="4896-SPAPJ760.03c.1"/>
<dbReference type="EnsemblFungi" id="SPAPJ760.03c.1">
    <property type="protein sequence ID" value="SPAPJ760.03c.1:pep"/>
    <property type="gene ID" value="SPAPJ760.03c"/>
</dbReference>
<dbReference type="GeneID" id="2543050"/>
<dbReference type="KEGG" id="spo:2543050"/>
<dbReference type="PomBase" id="SPAPJ760.03c">
    <property type="gene designation" value="adg1"/>
</dbReference>
<dbReference type="VEuPathDB" id="FungiDB:SPAPJ760.03c"/>
<dbReference type="HOGENOM" id="CLU_1661811_0_0_1"/>
<dbReference type="InParanoid" id="Q9P7E7"/>
<dbReference type="PRO" id="PR:Q9P7E7"/>
<dbReference type="Proteomes" id="UP000002485">
    <property type="component" value="Chromosome I"/>
</dbReference>
<dbReference type="GO" id="GO:0005737">
    <property type="term" value="C:cytoplasm"/>
    <property type="evidence" value="ECO:0007005"/>
    <property type="project" value="PomBase"/>
</dbReference>
<dbReference type="GO" id="GO:0005783">
    <property type="term" value="C:endoplasmic reticulum"/>
    <property type="evidence" value="ECO:0007005"/>
    <property type="project" value="PomBase"/>
</dbReference>
<protein>
    <recommendedName>
        <fullName>Protein adg1</fullName>
    </recommendedName>
</protein>
<proteinExistence type="inferred from homology"/>
<reference key="1">
    <citation type="journal article" date="2002" name="Nature">
        <title>The genome sequence of Schizosaccharomyces pombe.</title>
        <authorList>
            <person name="Wood V."/>
            <person name="Gwilliam R."/>
            <person name="Rajandream M.A."/>
            <person name="Lyne M.H."/>
            <person name="Lyne R."/>
            <person name="Stewart A."/>
            <person name="Sgouros J.G."/>
            <person name="Peat N."/>
            <person name="Hayles J."/>
            <person name="Baker S.G."/>
            <person name="Basham D."/>
            <person name="Bowman S."/>
            <person name="Brooks K."/>
            <person name="Brown D."/>
            <person name="Brown S."/>
            <person name="Chillingworth T."/>
            <person name="Churcher C.M."/>
            <person name="Collins M."/>
            <person name="Connor R."/>
            <person name="Cronin A."/>
            <person name="Davis P."/>
            <person name="Feltwell T."/>
            <person name="Fraser A."/>
            <person name="Gentles S."/>
            <person name="Goble A."/>
            <person name="Hamlin N."/>
            <person name="Harris D.E."/>
            <person name="Hidalgo J."/>
            <person name="Hodgson G."/>
            <person name="Holroyd S."/>
            <person name="Hornsby T."/>
            <person name="Howarth S."/>
            <person name="Huckle E.J."/>
            <person name="Hunt S."/>
            <person name="Jagels K."/>
            <person name="James K.D."/>
            <person name="Jones L."/>
            <person name="Jones M."/>
            <person name="Leather S."/>
            <person name="McDonald S."/>
            <person name="McLean J."/>
            <person name="Mooney P."/>
            <person name="Moule S."/>
            <person name="Mungall K.L."/>
            <person name="Murphy L.D."/>
            <person name="Niblett D."/>
            <person name="Odell C."/>
            <person name="Oliver K."/>
            <person name="O'Neil S."/>
            <person name="Pearson D."/>
            <person name="Quail M.A."/>
            <person name="Rabbinowitsch E."/>
            <person name="Rutherford K.M."/>
            <person name="Rutter S."/>
            <person name="Saunders D."/>
            <person name="Seeger K."/>
            <person name="Sharp S."/>
            <person name="Skelton J."/>
            <person name="Simmonds M.N."/>
            <person name="Squares R."/>
            <person name="Squares S."/>
            <person name="Stevens K."/>
            <person name="Taylor K."/>
            <person name="Taylor R.G."/>
            <person name="Tivey A."/>
            <person name="Walsh S.V."/>
            <person name="Warren T."/>
            <person name="Whitehead S."/>
            <person name="Woodward J.R."/>
            <person name="Volckaert G."/>
            <person name="Aert R."/>
            <person name="Robben J."/>
            <person name="Grymonprez B."/>
            <person name="Weltjens I."/>
            <person name="Vanstreels E."/>
            <person name="Rieger M."/>
            <person name="Schaefer M."/>
            <person name="Mueller-Auer S."/>
            <person name="Gabel C."/>
            <person name="Fuchs M."/>
            <person name="Duesterhoeft A."/>
            <person name="Fritzc C."/>
            <person name="Holzer E."/>
            <person name="Moestl D."/>
            <person name="Hilbert H."/>
            <person name="Borzym K."/>
            <person name="Langer I."/>
            <person name="Beck A."/>
            <person name="Lehrach H."/>
            <person name="Reinhardt R."/>
            <person name="Pohl T.M."/>
            <person name="Eger P."/>
            <person name="Zimmermann W."/>
            <person name="Wedler H."/>
            <person name="Wambutt R."/>
            <person name="Purnelle B."/>
            <person name="Goffeau A."/>
            <person name="Cadieu E."/>
            <person name="Dreano S."/>
            <person name="Gloux S."/>
            <person name="Lelaure V."/>
            <person name="Mottier S."/>
            <person name="Galibert F."/>
            <person name="Aves S.J."/>
            <person name="Xiang Z."/>
            <person name="Hunt C."/>
            <person name="Moore K."/>
            <person name="Hurst S.M."/>
            <person name="Lucas M."/>
            <person name="Rochet M."/>
            <person name="Gaillardin C."/>
            <person name="Tallada V.A."/>
            <person name="Garzon A."/>
            <person name="Thode G."/>
            <person name="Daga R.R."/>
            <person name="Cruzado L."/>
            <person name="Jimenez J."/>
            <person name="Sanchez M."/>
            <person name="del Rey F."/>
            <person name="Benito J."/>
            <person name="Dominguez A."/>
            <person name="Revuelta J.L."/>
            <person name="Moreno S."/>
            <person name="Armstrong J."/>
            <person name="Forsburg S.L."/>
            <person name="Cerutti L."/>
            <person name="Lowe T."/>
            <person name="McCombie W.R."/>
            <person name="Paulsen I."/>
            <person name="Potashkin J."/>
            <person name="Shpakovski G.V."/>
            <person name="Ussery D."/>
            <person name="Barrell B.G."/>
            <person name="Nurse P."/>
        </authorList>
    </citation>
    <scope>NUCLEOTIDE SEQUENCE [LARGE SCALE GENOMIC DNA]</scope>
    <source>
        <strain>972 / ATCC 24843</strain>
    </source>
</reference>
<feature type="signal peptide" evidence="1">
    <location>
        <begin position="1"/>
        <end position="22"/>
    </location>
</feature>
<feature type="chain" id="PRO_0000303925" description="Protein adg1">
    <location>
        <begin position="23"/>
        <end position="166"/>
    </location>
</feature>
<evidence type="ECO:0000255" key="1"/>
<keyword id="KW-0256">Endoplasmic reticulum</keyword>
<keyword id="KW-1185">Reference proteome</keyword>
<keyword id="KW-0732">Signal</keyword>
<organism>
    <name type="scientific">Schizosaccharomyces pombe (strain 972 / ATCC 24843)</name>
    <name type="common">Fission yeast</name>
    <dbReference type="NCBI Taxonomy" id="284812"/>
    <lineage>
        <taxon>Eukaryota</taxon>
        <taxon>Fungi</taxon>
        <taxon>Dikarya</taxon>
        <taxon>Ascomycota</taxon>
        <taxon>Taphrinomycotina</taxon>
        <taxon>Schizosaccharomycetes</taxon>
        <taxon>Schizosaccharomycetales</taxon>
        <taxon>Schizosaccharomycetaceae</taxon>
        <taxon>Schizosaccharomyces</taxon>
    </lineage>
</organism>
<comment type="subcellular location">
    <subcellularLocation>
        <location>Endoplasmic reticulum</location>
    </subcellularLocation>
</comment>
<gene>
    <name type="primary">adg1</name>
    <name type="ORF">SPAPJ760.03c</name>
</gene>
<sequence length="166" mass="17398">MFLRSIFQTLCAVSFLAGSVFADSGVSIVSTPATTTVYLVRTVDCSSSEVTSQPVVTVYNVLKPDTVTFTVTETAGSYAKRSIEIDSDSVSPTSATTTTPVASATDVSVYSASIHVPTGNPPVDTHNPLSYDTEVTATTTFSIALPKFNKGDRVSSANTYSVSFVA</sequence>
<accession>Q9P7E7</accession>